<dbReference type="EC" id="2.8.4.3" evidence="1"/>
<dbReference type="EMBL" id="LT708304">
    <property type="protein sequence ID" value="SIU01370.1"/>
    <property type="molecule type" value="Genomic_DNA"/>
</dbReference>
<dbReference type="RefSeq" id="NP_856398.1">
    <property type="nucleotide sequence ID" value="NC_002945.3"/>
</dbReference>
<dbReference type="RefSeq" id="WP_003414001.1">
    <property type="nucleotide sequence ID" value="NC_002945.4"/>
</dbReference>
<dbReference type="SMR" id="P67086"/>
<dbReference type="KEGG" id="mbo:BQ2027_MB2752C"/>
<dbReference type="PATRIC" id="fig|233413.5.peg.3015"/>
<dbReference type="Proteomes" id="UP000001419">
    <property type="component" value="Chromosome"/>
</dbReference>
<dbReference type="GO" id="GO:0005829">
    <property type="term" value="C:cytosol"/>
    <property type="evidence" value="ECO:0007669"/>
    <property type="project" value="TreeGrafter"/>
</dbReference>
<dbReference type="GO" id="GO:0051539">
    <property type="term" value="F:4 iron, 4 sulfur cluster binding"/>
    <property type="evidence" value="ECO:0007669"/>
    <property type="project" value="UniProtKB-UniRule"/>
</dbReference>
<dbReference type="GO" id="GO:0046872">
    <property type="term" value="F:metal ion binding"/>
    <property type="evidence" value="ECO:0007669"/>
    <property type="project" value="UniProtKB-KW"/>
</dbReference>
<dbReference type="GO" id="GO:0035597">
    <property type="term" value="F:N6-isopentenyladenosine methylthiotransferase activity"/>
    <property type="evidence" value="ECO:0007669"/>
    <property type="project" value="TreeGrafter"/>
</dbReference>
<dbReference type="CDD" id="cd01335">
    <property type="entry name" value="Radical_SAM"/>
    <property type="match status" value="1"/>
</dbReference>
<dbReference type="FunFam" id="3.40.50.12160:FF:000008">
    <property type="entry name" value="tRNA-2-methylthio-N(6)-dimethylallyladenosine synthase"/>
    <property type="match status" value="1"/>
</dbReference>
<dbReference type="FunFam" id="3.80.30.20:FF:000001">
    <property type="entry name" value="tRNA-2-methylthio-N(6)-dimethylallyladenosine synthase 2"/>
    <property type="match status" value="1"/>
</dbReference>
<dbReference type="Gene3D" id="3.40.50.12160">
    <property type="entry name" value="Methylthiotransferase, N-terminal domain"/>
    <property type="match status" value="1"/>
</dbReference>
<dbReference type="Gene3D" id="3.80.30.20">
    <property type="entry name" value="tm_1862 like domain"/>
    <property type="match status" value="1"/>
</dbReference>
<dbReference type="HAMAP" id="MF_01864">
    <property type="entry name" value="tRNA_metthiotr_MiaB"/>
    <property type="match status" value="1"/>
</dbReference>
<dbReference type="InterPro" id="IPR006638">
    <property type="entry name" value="Elp3/MiaA/NifB-like_rSAM"/>
</dbReference>
<dbReference type="InterPro" id="IPR005839">
    <property type="entry name" value="Methylthiotransferase"/>
</dbReference>
<dbReference type="InterPro" id="IPR020612">
    <property type="entry name" value="Methylthiotransferase_CS"/>
</dbReference>
<dbReference type="InterPro" id="IPR013848">
    <property type="entry name" value="Methylthiotransferase_N"/>
</dbReference>
<dbReference type="InterPro" id="IPR038135">
    <property type="entry name" value="Methylthiotransferase_N_sf"/>
</dbReference>
<dbReference type="InterPro" id="IPR006463">
    <property type="entry name" value="MiaB_methiolase"/>
</dbReference>
<dbReference type="InterPro" id="IPR007197">
    <property type="entry name" value="rSAM"/>
</dbReference>
<dbReference type="InterPro" id="IPR023404">
    <property type="entry name" value="rSAM_horseshoe"/>
</dbReference>
<dbReference type="InterPro" id="IPR002792">
    <property type="entry name" value="TRAM_dom"/>
</dbReference>
<dbReference type="NCBIfam" id="TIGR01574">
    <property type="entry name" value="miaB-methiolase"/>
    <property type="match status" value="1"/>
</dbReference>
<dbReference type="NCBIfam" id="TIGR00089">
    <property type="entry name" value="MiaB/RimO family radical SAM methylthiotransferase"/>
    <property type="match status" value="1"/>
</dbReference>
<dbReference type="PANTHER" id="PTHR43020">
    <property type="entry name" value="CDK5 REGULATORY SUBUNIT-ASSOCIATED PROTEIN 1"/>
    <property type="match status" value="1"/>
</dbReference>
<dbReference type="PANTHER" id="PTHR43020:SF2">
    <property type="entry name" value="MITOCHONDRIAL TRNA METHYLTHIOTRANSFERASE CDK5RAP1"/>
    <property type="match status" value="1"/>
</dbReference>
<dbReference type="Pfam" id="PF04055">
    <property type="entry name" value="Radical_SAM"/>
    <property type="match status" value="1"/>
</dbReference>
<dbReference type="Pfam" id="PF00919">
    <property type="entry name" value="UPF0004"/>
    <property type="match status" value="1"/>
</dbReference>
<dbReference type="SFLD" id="SFLDF00273">
    <property type="entry name" value="(dimethylallyl)adenosine_tRNA"/>
    <property type="match status" value="1"/>
</dbReference>
<dbReference type="SFLD" id="SFLDG01082">
    <property type="entry name" value="B12-binding_domain_containing"/>
    <property type="match status" value="1"/>
</dbReference>
<dbReference type="SFLD" id="SFLDS00029">
    <property type="entry name" value="Radical_SAM"/>
    <property type="match status" value="1"/>
</dbReference>
<dbReference type="SMART" id="SM00729">
    <property type="entry name" value="Elp3"/>
    <property type="match status" value="1"/>
</dbReference>
<dbReference type="SUPFAM" id="SSF102114">
    <property type="entry name" value="Radical SAM enzymes"/>
    <property type="match status" value="1"/>
</dbReference>
<dbReference type="PROSITE" id="PS51449">
    <property type="entry name" value="MTTASE_N"/>
    <property type="match status" value="1"/>
</dbReference>
<dbReference type="PROSITE" id="PS01278">
    <property type="entry name" value="MTTASE_RADICAL"/>
    <property type="match status" value="1"/>
</dbReference>
<dbReference type="PROSITE" id="PS51918">
    <property type="entry name" value="RADICAL_SAM"/>
    <property type="match status" value="1"/>
</dbReference>
<dbReference type="PROSITE" id="PS50926">
    <property type="entry name" value="TRAM"/>
    <property type="match status" value="1"/>
</dbReference>
<gene>
    <name evidence="1" type="primary">miaB</name>
    <name type="ordered locus">BQ2027_MB2752C</name>
</gene>
<name>MIAB_MYCBO</name>
<comment type="function">
    <text evidence="1">Catalyzes the methylthiolation of N6-(dimethylallyl)adenosine (i(6)A), leading to the formation of 2-methylthio-N6-(dimethylallyl)adenosine (ms(2)i(6)A) at position 37 in tRNAs that read codons beginning with uridine.</text>
</comment>
<comment type="catalytic activity">
    <reaction evidence="1">
        <text>N(6)-dimethylallyladenosine(37) in tRNA + (sulfur carrier)-SH + AH2 + 2 S-adenosyl-L-methionine = 2-methylsulfanyl-N(6)-dimethylallyladenosine(37) in tRNA + (sulfur carrier)-H + 5'-deoxyadenosine + L-methionine + A + S-adenosyl-L-homocysteine + 2 H(+)</text>
        <dbReference type="Rhea" id="RHEA:37067"/>
        <dbReference type="Rhea" id="RHEA-COMP:10375"/>
        <dbReference type="Rhea" id="RHEA-COMP:10376"/>
        <dbReference type="Rhea" id="RHEA-COMP:14737"/>
        <dbReference type="Rhea" id="RHEA-COMP:14739"/>
        <dbReference type="ChEBI" id="CHEBI:13193"/>
        <dbReference type="ChEBI" id="CHEBI:15378"/>
        <dbReference type="ChEBI" id="CHEBI:17319"/>
        <dbReference type="ChEBI" id="CHEBI:17499"/>
        <dbReference type="ChEBI" id="CHEBI:29917"/>
        <dbReference type="ChEBI" id="CHEBI:57844"/>
        <dbReference type="ChEBI" id="CHEBI:57856"/>
        <dbReference type="ChEBI" id="CHEBI:59789"/>
        <dbReference type="ChEBI" id="CHEBI:64428"/>
        <dbReference type="ChEBI" id="CHEBI:74415"/>
        <dbReference type="ChEBI" id="CHEBI:74417"/>
        <dbReference type="EC" id="2.8.4.3"/>
    </reaction>
</comment>
<comment type="cofactor">
    <cofactor evidence="1">
        <name>[4Fe-4S] cluster</name>
        <dbReference type="ChEBI" id="CHEBI:49883"/>
    </cofactor>
    <text evidence="1">Binds 2 [4Fe-4S] clusters. One cluster is coordinated with 3 cysteines and an exchangeable S-adenosyl-L-methionine.</text>
</comment>
<comment type="subunit">
    <text evidence="1">Monomer.</text>
</comment>
<comment type="subcellular location">
    <subcellularLocation>
        <location evidence="1">Cytoplasm</location>
    </subcellularLocation>
</comment>
<comment type="similarity">
    <text evidence="1">Belongs to the methylthiotransferase family. MiaB subfamily.</text>
</comment>
<accession>P67086</accession>
<accession>A0A1R3Y207</accession>
<accession>O33238</accession>
<accession>X2BM44</accession>
<reference key="1">
    <citation type="journal article" date="2003" name="Proc. Natl. Acad. Sci. U.S.A.">
        <title>The complete genome sequence of Mycobacterium bovis.</title>
        <authorList>
            <person name="Garnier T."/>
            <person name="Eiglmeier K."/>
            <person name="Camus J.-C."/>
            <person name="Medina N."/>
            <person name="Mansoor H."/>
            <person name="Pryor M."/>
            <person name="Duthoy S."/>
            <person name="Grondin S."/>
            <person name="Lacroix C."/>
            <person name="Monsempe C."/>
            <person name="Simon S."/>
            <person name="Harris B."/>
            <person name="Atkin R."/>
            <person name="Doggett J."/>
            <person name="Mayes R."/>
            <person name="Keating L."/>
            <person name="Wheeler P.R."/>
            <person name="Parkhill J."/>
            <person name="Barrell B.G."/>
            <person name="Cole S.T."/>
            <person name="Gordon S.V."/>
            <person name="Hewinson R.G."/>
        </authorList>
    </citation>
    <scope>NUCLEOTIDE SEQUENCE [LARGE SCALE GENOMIC DNA]</scope>
    <source>
        <strain>ATCC BAA-935 / AF2122/97</strain>
    </source>
</reference>
<reference key="2">
    <citation type="journal article" date="2017" name="Genome Announc.">
        <title>Updated reference genome sequence and annotation of Mycobacterium bovis AF2122/97.</title>
        <authorList>
            <person name="Malone K.M."/>
            <person name="Farrell D."/>
            <person name="Stuber T.P."/>
            <person name="Schubert O.T."/>
            <person name="Aebersold R."/>
            <person name="Robbe-Austerman S."/>
            <person name="Gordon S.V."/>
        </authorList>
    </citation>
    <scope>NUCLEOTIDE SEQUENCE [LARGE SCALE GENOMIC DNA]</scope>
    <scope>GENOME REANNOTATION</scope>
    <source>
        <strain>ATCC BAA-935 / AF2122/97</strain>
    </source>
</reference>
<organism>
    <name type="scientific">Mycobacterium bovis (strain ATCC BAA-935 / AF2122/97)</name>
    <dbReference type="NCBI Taxonomy" id="233413"/>
    <lineage>
        <taxon>Bacteria</taxon>
        <taxon>Bacillati</taxon>
        <taxon>Actinomycetota</taxon>
        <taxon>Actinomycetes</taxon>
        <taxon>Mycobacteriales</taxon>
        <taxon>Mycobacteriaceae</taxon>
        <taxon>Mycobacterium</taxon>
        <taxon>Mycobacterium tuberculosis complex</taxon>
    </lineage>
</organism>
<evidence type="ECO:0000255" key="1">
    <source>
        <dbReference type="HAMAP-Rule" id="MF_01864"/>
    </source>
</evidence>
<evidence type="ECO:0000255" key="2">
    <source>
        <dbReference type="PROSITE-ProRule" id="PRU01266"/>
    </source>
</evidence>
<evidence type="ECO:0000256" key="3">
    <source>
        <dbReference type="SAM" id="MobiDB-lite"/>
    </source>
</evidence>
<sequence length="512" mass="55086">MVAHDAAAGVTGEGAGPPVRRAPARTYQVRTYGCQMNVHDSERLAGLLEAAGYRRATDGSEADVVVFNTCAVRENADNRLYGNLSHLAPRKRANPDMQIAVGGCLAQKDRDAVLRRAPWVDVVFGTHNIGSLPTLLERARHNKVAQVEIAEALQQFPSSLPSSRESAYAAWVSISVGCNNSCTFCIVPSLRGREVDRSPADILAEVRSLVNDGVLEVTLLGQNVNAYGVSFADPALPRNRGAFAELLRACGDIDGLERVRFTSPHPAEFTDDVIEAMAQTRNVCPALHMPLQSGSDRILRAMRRSYRAERYLGIIERVRAAIPHAAITTDLIVGFPGETEEDFAATLDVVRRARFAAAFTFQYSKRPGTPAAQLDGQLPKAVVQERYERLIALQEQISLEANRALVGQAVEVLVATGEGRKDTVTARMSGRARDGRLVHFTAGQPRVRPGDVITTKVTEAAPHHLIADAGVLTHRRTRAGDAHTAGQPGRAVGLGMPGVGLPVSAAKPGGCR</sequence>
<proteinExistence type="inferred from homology"/>
<keyword id="KW-0004">4Fe-4S</keyword>
<keyword id="KW-0963">Cytoplasm</keyword>
<keyword id="KW-0408">Iron</keyword>
<keyword id="KW-0411">Iron-sulfur</keyword>
<keyword id="KW-0479">Metal-binding</keyword>
<keyword id="KW-1185">Reference proteome</keyword>
<keyword id="KW-0949">S-adenosyl-L-methionine</keyword>
<keyword id="KW-0808">Transferase</keyword>
<keyword id="KW-0819">tRNA processing</keyword>
<feature type="chain" id="PRO_0000141746" description="tRNA-2-methylthio-N(6)-dimethylallyladenosine synthase">
    <location>
        <begin position="1"/>
        <end position="512"/>
    </location>
</feature>
<feature type="domain" description="MTTase N-terminal" evidence="1">
    <location>
        <begin position="25"/>
        <end position="141"/>
    </location>
</feature>
<feature type="domain" description="Radical SAM core" evidence="2">
    <location>
        <begin position="164"/>
        <end position="400"/>
    </location>
</feature>
<feature type="domain" description="TRAM" evidence="1">
    <location>
        <begin position="403"/>
        <end position="471"/>
    </location>
</feature>
<feature type="region of interest" description="Disordered" evidence="3">
    <location>
        <begin position="1"/>
        <end position="22"/>
    </location>
</feature>
<feature type="binding site" evidence="1">
    <location>
        <position position="34"/>
    </location>
    <ligand>
        <name>[4Fe-4S] cluster</name>
        <dbReference type="ChEBI" id="CHEBI:49883"/>
        <label>1</label>
    </ligand>
</feature>
<feature type="binding site" evidence="1">
    <location>
        <position position="70"/>
    </location>
    <ligand>
        <name>[4Fe-4S] cluster</name>
        <dbReference type="ChEBI" id="CHEBI:49883"/>
        <label>1</label>
    </ligand>
</feature>
<feature type="binding site" evidence="1">
    <location>
        <position position="104"/>
    </location>
    <ligand>
        <name>[4Fe-4S] cluster</name>
        <dbReference type="ChEBI" id="CHEBI:49883"/>
        <label>1</label>
    </ligand>
</feature>
<feature type="binding site" evidence="1">
    <location>
        <position position="178"/>
    </location>
    <ligand>
        <name>[4Fe-4S] cluster</name>
        <dbReference type="ChEBI" id="CHEBI:49883"/>
        <label>2</label>
        <note>4Fe-4S-S-AdoMet</note>
    </ligand>
</feature>
<feature type="binding site" evidence="1">
    <location>
        <position position="182"/>
    </location>
    <ligand>
        <name>[4Fe-4S] cluster</name>
        <dbReference type="ChEBI" id="CHEBI:49883"/>
        <label>2</label>
        <note>4Fe-4S-S-AdoMet</note>
    </ligand>
</feature>
<feature type="binding site" evidence="1">
    <location>
        <position position="185"/>
    </location>
    <ligand>
        <name>[4Fe-4S] cluster</name>
        <dbReference type="ChEBI" id="CHEBI:49883"/>
        <label>2</label>
        <note>4Fe-4S-S-AdoMet</note>
    </ligand>
</feature>
<protein>
    <recommendedName>
        <fullName evidence="1">tRNA-2-methylthio-N(6)-dimethylallyladenosine synthase</fullName>
        <ecNumber evidence="1">2.8.4.3</ecNumber>
    </recommendedName>
    <alternativeName>
        <fullName evidence="1">(Dimethylallyl)adenosine tRNA methylthiotransferase MiaB</fullName>
    </alternativeName>
    <alternativeName>
        <fullName evidence="1">tRNA-i(6)A37 methylthiotransferase</fullName>
    </alternativeName>
</protein>